<sequence length="288" mass="32008">MHQSTLLKPVSCYGIGVHTGKRTQLTIEPAKENTGIIFIRTDISSENNYIEASYCNVSDTLLSTTISNNHKIQISTIEHLMAALWGCSIDNAIIKIDGPEVPIMDGSSKPFVFMIECAGKKLQNAPKKYLKILKEVKVVNKDCELYCTPSEHMAVDLTIDFSSKAIGRQNLSFGMQESFTKNIADARTFGFIRDVEYLKSKGLAQGASFENAIGIDEHDKVLNPSGLRYADEFVRHKLLDLFGDLYTSGISVVSAIKGYKTSHAFNNELLHKIFSDTTSYKFVTSNEL</sequence>
<reference key="1">
    <citation type="journal article" date="1998" name="Nature">
        <title>The genome sequence of Rickettsia prowazekii and the origin of mitochondria.</title>
        <authorList>
            <person name="Andersson S.G.E."/>
            <person name="Zomorodipour A."/>
            <person name="Andersson J.O."/>
            <person name="Sicheritz-Ponten T."/>
            <person name="Alsmark U.C.M."/>
            <person name="Podowski R.M."/>
            <person name="Naeslund A.K."/>
            <person name="Eriksson A.-S."/>
            <person name="Winkler H.H."/>
            <person name="Kurland C.G."/>
        </authorList>
    </citation>
    <scope>NUCLEOTIDE SEQUENCE [LARGE SCALE GENOMIC DNA]</scope>
    <source>
        <strain>Madrid E</strain>
    </source>
</reference>
<keyword id="KW-0378">Hydrolase</keyword>
<keyword id="KW-0441">Lipid A biosynthesis</keyword>
<keyword id="KW-0444">Lipid biosynthesis</keyword>
<keyword id="KW-0443">Lipid metabolism</keyword>
<keyword id="KW-0479">Metal-binding</keyword>
<keyword id="KW-1185">Reference proteome</keyword>
<keyword id="KW-0862">Zinc</keyword>
<name>LPXC_RICPR</name>
<comment type="function">
    <text evidence="1">Catalyzes the hydrolysis of UDP-3-O-myristoyl-N-acetylglucosamine to form UDP-3-O-myristoylglucosamine and acetate, the committed step in lipid A biosynthesis.</text>
</comment>
<comment type="catalytic activity">
    <reaction evidence="1">
        <text>a UDP-3-O-[(3R)-3-hydroxyacyl]-N-acetyl-alpha-D-glucosamine + H2O = a UDP-3-O-[(3R)-3-hydroxyacyl]-alpha-D-glucosamine + acetate</text>
        <dbReference type="Rhea" id="RHEA:67816"/>
        <dbReference type="ChEBI" id="CHEBI:15377"/>
        <dbReference type="ChEBI" id="CHEBI:30089"/>
        <dbReference type="ChEBI" id="CHEBI:137740"/>
        <dbReference type="ChEBI" id="CHEBI:173225"/>
        <dbReference type="EC" id="3.5.1.108"/>
    </reaction>
</comment>
<comment type="cofactor">
    <cofactor evidence="1">
        <name>Zn(2+)</name>
        <dbReference type="ChEBI" id="CHEBI:29105"/>
    </cofactor>
</comment>
<comment type="pathway">
    <text evidence="1">Glycolipid biosynthesis; lipid IV(A) biosynthesis; lipid IV(A) from (3R)-3-hydroxytetradecanoyl-[acyl-carrier-protein] and UDP-N-acetyl-alpha-D-glucosamine: step 2/6.</text>
</comment>
<comment type="similarity">
    <text evidence="1">Belongs to the LpxC family.</text>
</comment>
<organism>
    <name type="scientific">Rickettsia prowazekii (strain Madrid E)</name>
    <dbReference type="NCBI Taxonomy" id="272947"/>
    <lineage>
        <taxon>Bacteria</taxon>
        <taxon>Pseudomonadati</taxon>
        <taxon>Pseudomonadota</taxon>
        <taxon>Alphaproteobacteria</taxon>
        <taxon>Rickettsiales</taxon>
        <taxon>Rickettsiaceae</taxon>
        <taxon>Rickettsieae</taxon>
        <taxon>Rickettsia</taxon>
        <taxon>typhus group</taxon>
    </lineage>
</organism>
<protein>
    <recommendedName>
        <fullName evidence="1">UDP-3-O-acyl-N-acetylglucosamine deacetylase</fullName>
        <shortName evidence="1">UDP-3-O-acyl-GlcNAc deacetylase</shortName>
        <ecNumber evidence="1">3.5.1.108</ecNumber>
    </recommendedName>
    <alternativeName>
        <fullName evidence="1">UDP-3-O-[R-3-hydroxymyristoyl]-N-acetylglucosamine deacetylase</fullName>
    </alternativeName>
</protein>
<evidence type="ECO:0000255" key="1">
    <source>
        <dbReference type="HAMAP-Rule" id="MF_00388"/>
    </source>
</evidence>
<gene>
    <name evidence="1" type="primary">lpxC</name>
    <name type="ordered locus">RP254</name>
</gene>
<proteinExistence type="inferred from homology"/>
<accession>Q9ZDS1</accession>
<dbReference type="EC" id="3.5.1.108" evidence="1"/>
<dbReference type="EMBL" id="AJ235271">
    <property type="protein sequence ID" value="CAA14716.1"/>
    <property type="molecule type" value="Genomic_DNA"/>
</dbReference>
<dbReference type="PIR" id="B71680">
    <property type="entry name" value="B71680"/>
</dbReference>
<dbReference type="RefSeq" id="NP_220639.1">
    <property type="nucleotide sequence ID" value="NC_000963.1"/>
</dbReference>
<dbReference type="RefSeq" id="WP_004596080.1">
    <property type="nucleotide sequence ID" value="NC_000963.1"/>
</dbReference>
<dbReference type="SMR" id="Q9ZDS1"/>
<dbReference type="STRING" id="272947.gene:17555335"/>
<dbReference type="EnsemblBacteria" id="CAA14716">
    <property type="protein sequence ID" value="CAA14716"/>
    <property type="gene ID" value="CAA14716"/>
</dbReference>
<dbReference type="GeneID" id="57569382"/>
<dbReference type="KEGG" id="rpr:RP254"/>
<dbReference type="PATRIC" id="fig|272947.5.peg.261"/>
<dbReference type="eggNOG" id="COG0774">
    <property type="taxonomic scope" value="Bacteria"/>
</dbReference>
<dbReference type="HOGENOM" id="CLU_046528_1_1_5"/>
<dbReference type="OrthoDB" id="9802746at2"/>
<dbReference type="UniPathway" id="UPA00359">
    <property type="reaction ID" value="UER00478"/>
</dbReference>
<dbReference type="Proteomes" id="UP000002480">
    <property type="component" value="Chromosome"/>
</dbReference>
<dbReference type="GO" id="GO:0016020">
    <property type="term" value="C:membrane"/>
    <property type="evidence" value="ECO:0007669"/>
    <property type="project" value="GOC"/>
</dbReference>
<dbReference type="GO" id="GO:0046872">
    <property type="term" value="F:metal ion binding"/>
    <property type="evidence" value="ECO:0007669"/>
    <property type="project" value="UniProtKB-KW"/>
</dbReference>
<dbReference type="GO" id="GO:0103117">
    <property type="term" value="F:UDP-3-O-acyl-N-acetylglucosamine deacetylase activity"/>
    <property type="evidence" value="ECO:0007669"/>
    <property type="project" value="UniProtKB-UniRule"/>
</dbReference>
<dbReference type="GO" id="GO:0009245">
    <property type="term" value="P:lipid A biosynthetic process"/>
    <property type="evidence" value="ECO:0007669"/>
    <property type="project" value="UniProtKB-UniRule"/>
</dbReference>
<dbReference type="Gene3D" id="3.30.230.20">
    <property type="entry name" value="lpxc deacetylase, domain 1"/>
    <property type="match status" value="1"/>
</dbReference>
<dbReference type="Gene3D" id="3.30.1700.10">
    <property type="entry name" value="lpxc deacetylase, domain 2"/>
    <property type="match status" value="1"/>
</dbReference>
<dbReference type="HAMAP" id="MF_00388">
    <property type="entry name" value="LpxC"/>
    <property type="match status" value="1"/>
</dbReference>
<dbReference type="InterPro" id="IPR020568">
    <property type="entry name" value="Ribosomal_Su5_D2-typ_SF"/>
</dbReference>
<dbReference type="InterPro" id="IPR004463">
    <property type="entry name" value="UDP-acyl_GlcNac_deAcase"/>
</dbReference>
<dbReference type="InterPro" id="IPR011334">
    <property type="entry name" value="UDP-acyl_GlcNac_deAcase_C"/>
</dbReference>
<dbReference type="InterPro" id="IPR015870">
    <property type="entry name" value="UDP-acyl_N-AcGlcN_deAcase_N"/>
</dbReference>
<dbReference type="NCBIfam" id="TIGR00325">
    <property type="entry name" value="lpxC"/>
    <property type="match status" value="1"/>
</dbReference>
<dbReference type="PANTHER" id="PTHR33694">
    <property type="entry name" value="UDP-3-O-ACYL-N-ACETYLGLUCOSAMINE DEACETYLASE 1, MITOCHONDRIAL-RELATED"/>
    <property type="match status" value="1"/>
</dbReference>
<dbReference type="PANTHER" id="PTHR33694:SF1">
    <property type="entry name" value="UDP-3-O-ACYL-N-ACETYLGLUCOSAMINE DEACETYLASE 1, MITOCHONDRIAL-RELATED"/>
    <property type="match status" value="1"/>
</dbReference>
<dbReference type="Pfam" id="PF03331">
    <property type="entry name" value="LpxC"/>
    <property type="match status" value="1"/>
</dbReference>
<dbReference type="SUPFAM" id="SSF54211">
    <property type="entry name" value="Ribosomal protein S5 domain 2-like"/>
    <property type="match status" value="2"/>
</dbReference>
<feature type="chain" id="PRO_0000191951" description="UDP-3-O-acyl-N-acetylglucosamine deacetylase">
    <location>
        <begin position="1"/>
        <end position="288"/>
    </location>
</feature>
<feature type="active site" description="Proton donor" evidence="1">
    <location>
        <position position="263"/>
    </location>
</feature>
<feature type="binding site" evidence="1">
    <location>
        <position position="79"/>
    </location>
    <ligand>
        <name>Zn(2+)</name>
        <dbReference type="ChEBI" id="CHEBI:29105"/>
    </ligand>
</feature>
<feature type="binding site" evidence="1">
    <location>
        <position position="236"/>
    </location>
    <ligand>
        <name>Zn(2+)</name>
        <dbReference type="ChEBI" id="CHEBI:29105"/>
    </ligand>
</feature>
<feature type="binding site" evidence="1">
    <location>
        <position position="240"/>
    </location>
    <ligand>
        <name>Zn(2+)</name>
        <dbReference type="ChEBI" id="CHEBI:29105"/>
    </ligand>
</feature>